<reference key="1">
    <citation type="submission" date="2006-12" db="EMBL/GenBank/DDBJ databases">
        <title>Complete sequence of chromosome 1 of Nocardioides sp. JS614.</title>
        <authorList>
            <person name="Copeland A."/>
            <person name="Lucas S."/>
            <person name="Lapidus A."/>
            <person name="Barry K."/>
            <person name="Detter J.C."/>
            <person name="Glavina del Rio T."/>
            <person name="Hammon N."/>
            <person name="Israni S."/>
            <person name="Dalin E."/>
            <person name="Tice H."/>
            <person name="Pitluck S."/>
            <person name="Thompson L.S."/>
            <person name="Brettin T."/>
            <person name="Bruce D."/>
            <person name="Han C."/>
            <person name="Tapia R."/>
            <person name="Schmutz J."/>
            <person name="Larimer F."/>
            <person name="Land M."/>
            <person name="Hauser L."/>
            <person name="Kyrpides N."/>
            <person name="Kim E."/>
            <person name="Mattes T."/>
            <person name="Gossett J."/>
            <person name="Richardson P."/>
        </authorList>
    </citation>
    <scope>NUCLEOTIDE SEQUENCE [LARGE SCALE GENOMIC DNA]</scope>
    <source>
        <strain>ATCC BAA-499 / JS614</strain>
    </source>
</reference>
<accession>A1SER2</accession>
<feature type="chain" id="PRO_1000023403" description="Translational regulator CsrA">
    <location>
        <begin position="1"/>
        <end position="83"/>
    </location>
</feature>
<sequence>MLVLSRRAGESVVLGEDVVVTILEVRGDVVRVGIDAPRSVRVHRAELLAQLEETNRQAASPSEDVIANLARALDHGTGTDPSS</sequence>
<gene>
    <name evidence="1" type="primary">csrA</name>
    <name type="ordered locus">Noca_0772</name>
</gene>
<comment type="function">
    <text evidence="1">A translational regulator that binds mRNA to regulate translation initiation and/or mRNA stability. Usually binds in the 5'-UTR at or near the Shine-Dalgarno sequence preventing ribosome-binding, thus repressing translation. Its main target seems to be the major flagellin gene, while its function is anatagonized by FliW.</text>
</comment>
<comment type="subunit">
    <text evidence="1">Homodimer; the beta-strands of each monomer intercalate to form a hydrophobic core, while the alpha-helices form wings that extend away from the core.</text>
</comment>
<comment type="subcellular location">
    <subcellularLocation>
        <location evidence="1">Cytoplasm</location>
    </subcellularLocation>
</comment>
<comment type="similarity">
    <text evidence="1">Belongs to the CsrA/RsmA family.</text>
</comment>
<protein>
    <recommendedName>
        <fullName evidence="1">Translational regulator CsrA</fullName>
    </recommendedName>
</protein>
<organism>
    <name type="scientific">Nocardioides sp. (strain ATCC BAA-499 / JS614)</name>
    <dbReference type="NCBI Taxonomy" id="196162"/>
    <lineage>
        <taxon>Bacteria</taxon>
        <taxon>Bacillati</taxon>
        <taxon>Actinomycetota</taxon>
        <taxon>Actinomycetes</taxon>
        <taxon>Propionibacteriales</taxon>
        <taxon>Nocardioidaceae</taxon>
        <taxon>Nocardioides</taxon>
    </lineage>
</organism>
<keyword id="KW-1005">Bacterial flagellum biogenesis</keyword>
<keyword id="KW-0963">Cytoplasm</keyword>
<keyword id="KW-1185">Reference proteome</keyword>
<keyword id="KW-0678">Repressor</keyword>
<keyword id="KW-0694">RNA-binding</keyword>
<keyword id="KW-0810">Translation regulation</keyword>
<evidence type="ECO:0000255" key="1">
    <source>
        <dbReference type="HAMAP-Rule" id="MF_00167"/>
    </source>
</evidence>
<dbReference type="EMBL" id="CP000509">
    <property type="protein sequence ID" value="ABL80297.1"/>
    <property type="molecule type" value="Genomic_DNA"/>
</dbReference>
<dbReference type="RefSeq" id="WP_011754246.1">
    <property type="nucleotide sequence ID" value="NC_008699.1"/>
</dbReference>
<dbReference type="SMR" id="A1SER2"/>
<dbReference type="STRING" id="196162.Noca_0772"/>
<dbReference type="KEGG" id="nca:Noca_0772"/>
<dbReference type="eggNOG" id="COG1551">
    <property type="taxonomic scope" value="Bacteria"/>
</dbReference>
<dbReference type="HOGENOM" id="CLU_164837_0_0_11"/>
<dbReference type="OrthoDB" id="9809061at2"/>
<dbReference type="Proteomes" id="UP000000640">
    <property type="component" value="Chromosome"/>
</dbReference>
<dbReference type="GO" id="GO:0005829">
    <property type="term" value="C:cytosol"/>
    <property type="evidence" value="ECO:0007669"/>
    <property type="project" value="TreeGrafter"/>
</dbReference>
<dbReference type="GO" id="GO:0048027">
    <property type="term" value="F:mRNA 5'-UTR binding"/>
    <property type="evidence" value="ECO:0007669"/>
    <property type="project" value="UniProtKB-UniRule"/>
</dbReference>
<dbReference type="GO" id="GO:0044781">
    <property type="term" value="P:bacterial-type flagellum organization"/>
    <property type="evidence" value="ECO:0007669"/>
    <property type="project" value="UniProtKB-KW"/>
</dbReference>
<dbReference type="GO" id="GO:0006402">
    <property type="term" value="P:mRNA catabolic process"/>
    <property type="evidence" value="ECO:0007669"/>
    <property type="project" value="InterPro"/>
</dbReference>
<dbReference type="GO" id="GO:0045947">
    <property type="term" value="P:negative regulation of translational initiation"/>
    <property type="evidence" value="ECO:0007669"/>
    <property type="project" value="UniProtKB-UniRule"/>
</dbReference>
<dbReference type="GO" id="GO:1902208">
    <property type="term" value="P:regulation of bacterial-type flagellum assembly"/>
    <property type="evidence" value="ECO:0007669"/>
    <property type="project" value="UniProtKB-UniRule"/>
</dbReference>
<dbReference type="GO" id="GO:0006109">
    <property type="term" value="P:regulation of carbohydrate metabolic process"/>
    <property type="evidence" value="ECO:0007669"/>
    <property type="project" value="InterPro"/>
</dbReference>
<dbReference type="Gene3D" id="2.60.40.4380">
    <property type="entry name" value="Translational regulator CsrA"/>
    <property type="match status" value="1"/>
</dbReference>
<dbReference type="HAMAP" id="MF_00167">
    <property type="entry name" value="CsrA"/>
    <property type="match status" value="1"/>
</dbReference>
<dbReference type="InterPro" id="IPR003751">
    <property type="entry name" value="CsrA"/>
</dbReference>
<dbReference type="InterPro" id="IPR036107">
    <property type="entry name" value="CsrA_sf"/>
</dbReference>
<dbReference type="NCBIfam" id="TIGR00202">
    <property type="entry name" value="csrA"/>
    <property type="match status" value="1"/>
</dbReference>
<dbReference type="NCBIfam" id="NF002469">
    <property type="entry name" value="PRK01712.1"/>
    <property type="match status" value="1"/>
</dbReference>
<dbReference type="PANTHER" id="PTHR34984">
    <property type="entry name" value="CARBON STORAGE REGULATOR"/>
    <property type="match status" value="1"/>
</dbReference>
<dbReference type="PANTHER" id="PTHR34984:SF1">
    <property type="entry name" value="CARBON STORAGE REGULATOR"/>
    <property type="match status" value="1"/>
</dbReference>
<dbReference type="Pfam" id="PF02599">
    <property type="entry name" value="CsrA"/>
    <property type="match status" value="1"/>
</dbReference>
<dbReference type="SUPFAM" id="SSF117130">
    <property type="entry name" value="CsrA-like"/>
    <property type="match status" value="1"/>
</dbReference>
<name>CSRA_NOCSJ</name>
<proteinExistence type="inferred from homology"/>